<feature type="chain" id="PRO_0000117686" description="NADH-quinone oxidoreductase subunit 14">
    <location>
        <begin position="1"/>
        <end position="499"/>
    </location>
</feature>
<feature type="transmembrane region" description="Helical" evidence="1">
    <location>
        <begin position="9"/>
        <end position="29"/>
    </location>
</feature>
<feature type="transmembrane region" description="Helical" evidence="1">
    <location>
        <begin position="37"/>
        <end position="57"/>
    </location>
</feature>
<feature type="transmembrane region" description="Helical" evidence="1">
    <location>
        <begin position="76"/>
        <end position="96"/>
    </location>
</feature>
<feature type="transmembrane region" description="Helical" evidence="1">
    <location>
        <begin position="104"/>
        <end position="124"/>
    </location>
</feature>
<feature type="transmembrane region" description="Helical" evidence="1">
    <location>
        <begin position="126"/>
        <end position="146"/>
    </location>
</feature>
<feature type="transmembrane region" description="Helical" evidence="1">
    <location>
        <begin position="161"/>
        <end position="181"/>
    </location>
</feature>
<feature type="transmembrane region" description="Helical" evidence="1">
    <location>
        <begin position="196"/>
        <end position="216"/>
    </location>
</feature>
<feature type="transmembrane region" description="Helical" evidence="1">
    <location>
        <begin position="235"/>
        <end position="255"/>
    </location>
</feature>
<feature type="transmembrane region" description="Helical" evidence="1">
    <location>
        <begin position="269"/>
        <end position="289"/>
    </location>
</feature>
<feature type="transmembrane region" description="Helical" evidence="1">
    <location>
        <begin position="301"/>
        <end position="321"/>
    </location>
</feature>
<feature type="transmembrane region" description="Helical" evidence="1">
    <location>
        <begin position="324"/>
        <end position="344"/>
    </location>
</feature>
<feature type="transmembrane region" description="Helical" evidence="1">
    <location>
        <begin position="369"/>
        <end position="389"/>
    </location>
</feature>
<feature type="transmembrane region" description="Helical" evidence="1">
    <location>
        <begin position="402"/>
        <end position="422"/>
    </location>
</feature>
<feature type="transmembrane region" description="Helical" evidence="1">
    <location>
        <begin position="446"/>
        <end position="466"/>
    </location>
</feature>
<comment type="function">
    <text>NDH-1 shuttles electrons from NADH, via FMN and iron-sulfur (Fe-S) centers, to quinones in the respiratory chain. The immediate electron acceptor for the enzyme in this species is believed to be ubiquinone. Couples the redox reaction to proton translocation (for every two electrons transferred, four hydrogen ions are translocated across the cytoplasmic membrane), and thus conserves the redox energy in a proton gradient.</text>
</comment>
<comment type="catalytic activity">
    <reaction evidence="1">
        <text>a quinone + NADH + 5 H(+)(in) = a quinol + NAD(+) + 4 H(+)(out)</text>
        <dbReference type="Rhea" id="RHEA:57888"/>
        <dbReference type="ChEBI" id="CHEBI:15378"/>
        <dbReference type="ChEBI" id="CHEBI:24646"/>
        <dbReference type="ChEBI" id="CHEBI:57540"/>
        <dbReference type="ChEBI" id="CHEBI:57945"/>
        <dbReference type="ChEBI" id="CHEBI:132124"/>
    </reaction>
</comment>
<comment type="subunit">
    <text>NDH-1 is composed of at least 14 different subunits, Nqo1 to Nqo14. The complex has a L-shaped structure, with the hydrophobic arm (subunits Nqo7, Nqo8, Nqo10 to Nqo14) embedded in the inner membrane and the hydrophilic peripheral arm (subunits Nqo1 to Nqo6, Nqo9) protruding into the bacterial cytoplasm. The hydrophilic domain contains all the redox centers.</text>
</comment>
<comment type="subcellular location">
    <subcellularLocation>
        <location>Cell inner membrane</location>
        <topology>Multi-pass membrane protein</topology>
    </subcellularLocation>
</comment>
<comment type="similarity">
    <text evidence="1">Belongs to the complex I subunit 2 family.</text>
</comment>
<gene>
    <name evidence="2" type="primary">nqo14</name>
</gene>
<keyword id="KW-0997">Cell inner membrane</keyword>
<keyword id="KW-1003">Cell membrane</keyword>
<keyword id="KW-0472">Membrane</keyword>
<keyword id="KW-0520">NAD</keyword>
<keyword id="KW-0874">Quinone</keyword>
<keyword id="KW-1278">Translocase</keyword>
<keyword id="KW-0812">Transmembrane</keyword>
<keyword id="KW-1133">Transmembrane helix</keyword>
<keyword id="KW-0830">Ubiquinone</keyword>
<evidence type="ECO:0000255" key="1">
    <source>
        <dbReference type="HAMAP-Rule" id="MF_00445"/>
    </source>
</evidence>
<evidence type="ECO:0000303" key="2">
    <source>
    </source>
</evidence>
<proteinExistence type="inferred from homology"/>
<accession>P29926</accession>
<reference key="1">
    <citation type="journal article" date="1993" name="Biochemistry">
        <title>DNA sequencing of the seven remaining structural genes of the gene cluster encoding the energy-transducing NADH-quinone oxidoreductase of Paracoccus denitrificans.</title>
        <authorList>
            <person name="Xu X."/>
            <person name="Matsuno-Yagi A."/>
            <person name="Yagi T."/>
        </authorList>
    </citation>
    <scope>NUCLEOTIDE SEQUENCE [GENOMIC DNA]</scope>
    <source>
        <strain>ATCC 13543 / NRRL B-3784 / NRC 449</strain>
    </source>
</reference>
<dbReference type="EC" id="7.1.1.-" evidence="1"/>
<dbReference type="EMBL" id="L02354">
    <property type="protein sequence ID" value="AAA25600.1"/>
    <property type="molecule type" value="Genomic_DNA"/>
</dbReference>
<dbReference type="PIR" id="A47751">
    <property type="entry name" value="A47751"/>
</dbReference>
<dbReference type="SMR" id="P29926"/>
<dbReference type="TCDB" id="3.D.1.2.1">
    <property type="family name" value="the h+ or na+-translocating nadh dehydrogenase (ndh) family"/>
</dbReference>
<dbReference type="OMA" id="LMFFSEP"/>
<dbReference type="GO" id="GO:0005886">
    <property type="term" value="C:plasma membrane"/>
    <property type="evidence" value="ECO:0007669"/>
    <property type="project" value="UniProtKB-SubCell"/>
</dbReference>
<dbReference type="GO" id="GO:0008137">
    <property type="term" value="F:NADH dehydrogenase (ubiquinone) activity"/>
    <property type="evidence" value="ECO:0007669"/>
    <property type="project" value="InterPro"/>
</dbReference>
<dbReference type="GO" id="GO:0050136">
    <property type="term" value="F:NADH:ubiquinone reductase (non-electrogenic) activity"/>
    <property type="evidence" value="ECO:0007669"/>
    <property type="project" value="UniProtKB-UniRule"/>
</dbReference>
<dbReference type="GO" id="GO:0048038">
    <property type="term" value="F:quinone binding"/>
    <property type="evidence" value="ECO:0007669"/>
    <property type="project" value="UniProtKB-KW"/>
</dbReference>
<dbReference type="GO" id="GO:0042773">
    <property type="term" value="P:ATP synthesis coupled electron transport"/>
    <property type="evidence" value="ECO:0007669"/>
    <property type="project" value="InterPro"/>
</dbReference>
<dbReference type="HAMAP" id="MF_00445">
    <property type="entry name" value="NDH1_NuoN_1"/>
    <property type="match status" value="1"/>
</dbReference>
<dbReference type="InterPro" id="IPR010096">
    <property type="entry name" value="NADH-Q_OxRdtase_suN/2"/>
</dbReference>
<dbReference type="InterPro" id="IPR001750">
    <property type="entry name" value="ND/Mrp_TM"/>
</dbReference>
<dbReference type="NCBIfam" id="TIGR01770">
    <property type="entry name" value="NDH_I_N"/>
    <property type="match status" value="1"/>
</dbReference>
<dbReference type="NCBIfam" id="NF004440">
    <property type="entry name" value="PRK05777.1-3"/>
    <property type="match status" value="1"/>
</dbReference>
<dbReference type="PANTHER" id="PTHR22773">
    <property type="entry name" value="NADH DEHYDROGENASE"/>
    <property type="match status" value="1"/>
</dbReference>
<dbReference type="Pfam" id="PF00361">
    <property type="entry name" value="Proton_antipo_M"/>
    <property type="match status" value="1"/>
</dbReference>
<dbReference type="PRINTS" id="PR01434">
    <property type="entry name" value="NADHDHGNASE5"/>
</dbReference>
<name>NQO14_PARDE</name>
<protein>
    <recommendedName>
        <fullName>NADH-quinone oxidoreductase subunit 14</fullName>
        <ecNumber evidence="1">7.1.1.-</ecNumber>
    </recommendedName>
    <alternativeName>
        <fullName>NADH dehydrogenase I subunit 14</fullName>
    </alternativeName>
    <alternativeName>
        <fullName>NDH-1 subunit 14</fullName>
    </alternativeName>
</protein>
<organism>
    <name type="scientific">Paracoccus denitrificans</name>
    <dbReference type="NCBI Taxonomy" id="266"/>
    <lineage>
        <taxon>Bacteria</taxon>
        <taxon>Pseudomonadati</taxon>
        <taxon>Pseudomonadota</taxon>
        <taxon>Alphaproteobacteria</taxon>
        <taxon>Rhodobacterales</taxon>
        <taxon>Paracoccaceae</taxon>
        <taxon>Paracoccus</taxon>
    </lineage>
</organism>
<sequence>MTSLDFSTILPEVVLAGYALAALMAGAYLGKDRLARTLLWVTVAAFLVVAAMVGLGNHVDGAAFHGMFIDDGFSRFAKVVTLVAAAGVLAMSADYMQRRNMLRFEFPIIVALAVLGMMFMVSAGDLLTLYMGLELQSLALYVVAAMRRDSVRSSEAGLKYFVLGSLSSGLLLYGASLVYGFAGTTGFEGIISTIEAGHLSLGVLFGLVFMLVGLSFKVSAVPFHMWTPDVYEGSPTPVTAFFATAPKVAAMALIARLVFDAFGHVIGDWSQIVAALAVMSMFLGSIAGIGQTNIKRLMAYSSIAHMGFALVGLAAGTAIGVQNMLLYMTIYAVMNIGTFAFILSMERDGVPVTDLAALNRFAWTDPVKALAMLVLMFSLAGVPPTLGFFAKFGVLTAAVDAGMGWLAVLGVIASVIGAFYYLRIVYYMYFGGESEGMTSRMGAVQYLALMVPALAMLVGAISMFGVDSAAGRAAETLVGPVAAIEQPAEAAQAEPVQGE</sequence>